<gene>
    <name evidence="1" type="primary">infA</name>
    <name type="ordered locus">DET0497</name>
</gene>
<reference key="1">
    <citation type="journal article" date="2005" name="Science">
        <title>Genome sequence of the PCE-dechlorinating bacterium Dehalococcoides ethenogenes.</title>
        <authorList>
            <person name="Seshadri R."/>
            <person name="Adrian L."/>
            <person name="Fouts D.E."/>
            <person name="Eisen J.A."/>
            <person name="Phillippy A.M."/>
            <person name="Methe B.A."/>
            <person name="Ward N.L."/>
            <person name="Nelson W.C."/>
            <person name="DeBoy R.T."/>
            <person name="Khouri H.M."/>
            <person name="Kolonay J.F."/>
            <person name="Dodson R.J."/>
            <person name="Daugherty S.C."/>
            <person name="Brinkac L.M."/>
            <person name="Sullivan S.A."/>
            <person name="Madupu R."/>
            <person name="Nelson K.E."/>
            <person name="Kang K.H."/>
            <person name="Impraim M."/>
            <person name="Tran K."/>
            <person name="Robinson J.M."/>
            <person name="Forberger H.A."/>
            <person name="Fraser C.M."/>
            <person name="Zinder S.H."/>
            <person name="Heidelberg J.F."/>
        </authorList>
    </citation>
    <scope>NUCLEOTIDE SEQUENCE [LARGE SCALE GENOMIC DNA]</scope>
    <source>
        <strain>ATCC BAA-2266 / KCTC 15142 / 195</strain>
    </source>
</reference>
<accession>Q3Z958</accession>
<feature type="chain" id="PRO_0000263793" description="Translation initiation factor IF-1">
    <location>
        <begin position="1"/>
        <end position="73"/>
    </location>
</feature>
<feature type="domain" description="S1-like" evidence="1">
    <location>
        <begin position="1"/>
        <end position="72"/>
    </location>
</feature>
<sequence>MPKKDAIEVEATVLEALPSAAFRVQLSNGHEVLAHISGKMRVHYIRILPGDRVLVELSPYDLTRGRVTYRFKS</sequence>
<organism>
    <name type="scientific">Dehalococcoides mccartyi (strain ATCC BAA-2266 / KCTC 15142 / 195)</name>
    <name type="common">Dehalococcoides ethenogenes (strain 195)</name>
    <dbReference type="NCBI Taxonomy" id="243164"/>
    <lineage>
        <taxon>Bacteria</taxon>
        <taxon>Bacillati</taxon>
        <taxon>Chloroflexota</taxon>
        <taxon>Dehalococcoidia</taxon>
        <taxon>Dehalococcoidales</taxon>
        <taxon>Dehalococcoidaceae</taxon>
        <taxon>Dehalococcoides</taxon>
    </lineage>
</organism>
<evidence type="ECO:0000255" key="1">
    <source>
        <dbReference type="HAMAP-Rule" id="MF_00075"/>
    </source>
</evidence>
<keyword id="KW-0963">Cytoplasm</keyword>
<keyword id="KW-0396">Initiation factor</keyword>
<keyword id="KW-0648">Protein biosynthesis</keyword>
<keyword id="KW-0694">RNA-binding</keyword>
<keyword id="KW-0699">rRNA-binding</keyword>
<comment type="function">
    <text evidence="1">One of the essential components for the initiation of protein synthesis. Stabilizes the binding of IF-2 and IF-3 on the 30S subunit to which N-formylmethionyl-tRNA(fMet) subsequently binds. Helps modulate mRNA selection, yielding the 30S pre-initiation complex (PIC). Upon addition of the 50S ribosomal subunit IF-1, IF-2 and IF-3 are released leaving the mature 70S translation initiation complex.</text>
</comment>
<comment type="subunit">
    <text evidence="1">Component of the 30S ribosomal translation pre-initiation complex which assembles on the 30S ribosome in the order IF-2 and IF-3, IF-1 and N-formylmethionyl-tRNA(fMet); mRNA recruitment can occur at any time during PIC assembly.</text>
</comment>
<comment type="subcellular location">
    <subcellularLocation>
        <location evidence="1">Cytoplasm</location>
    </subcellularLocation>
</comment>
<comment type="similarity">
    <text evidence="1">Belongs to the IF-1 family.</text>
</comment>
<proteinExistence type="inferred from homology"/>
<protein>
    <recommendedName>
        <fullName evidence="1">Translation initiation factor IF-1</fullName>
    </recommendedName>
</protein>
<dbReference type="EMBL" id="CP000027">
    <property type="protein sequence ID" value="AAW40261.1"/>
    <property type="molecule type" value="Genomic_DNA"/>
</dbReference>
<dbReference type="RefSeq" id="WP_010936274.1">
    <property type="nucleotide sequence ID" value="NC_002936.3"/>
</dbReference>
<dbReference type="SMR" id="Q3Z958"/>
<dbReference type="FunCoup" id="Q3Z958">
    <property type="interactions" value="255"/>
</dbReference>
<dbReference type="STRING" id="243164.DET0497"/>
<dbReference type="GeneID" id="3230225"/>
<dbReference type="KEGG" id="det:DET0497"/>
<dbReference type="eggNOG" id="COG0361">
    <property type="taxonomic scope" value="Bacteria"/>
</dbReference>
<dbReference type="HOGENOM" id="CLU_151267_1_0_0"/>
<dbReference type="InParanoid" id="Q3Z958"/>
<dbReference type="Proteomes" id="UP000008289">
    <property type="component" value="Chromosome"/>
</dbReference>
<dbReference type="GO" id="GO:0005829">
    <property type="term" value="C:cytosol"/>
    <property type="evidence" value="ECO:0007669"/>
    <property type="project" value="TreeGrafter"/>
</dbReference>
<dbReference type="GO" id="GO:0043022">
    <property type="term" value="F:ribosome binding"/>
    <property type="evidence" value="ECO:0007669"/>
    <property type="project" value="UniProtKB-UniRule"/>
</dbReference>
<dbReference type="GO" id="GO:0019843">
    <property type="term" value="F:rRNA binding"/>
    <property type="evidence" value="ECO:0007669"/>
    <property type="project" value="UniProtKB-UniRule"/>
</dbReference>
<dbReference type="GO" id="GO:0003743">
    <property type="term" value="F:translation initiation factor activity"/>
    <property type="evidence" value="ECO:0007669"/>
    <property type="project" value="UniProtKB-UniRule"/>
</dbReference>
<dbReference type="CDD" id="cd04451">
    <property type="entry name" value="S1_IF1"/>
    <property type="match status" value="1"/>
</dbReference>
<dbReference type="FunFam" id="2.40.50.140:FF:000002">
    <property type="entry name" value="Translation initiation factor IF-1"/>
    <property type="match status" value="1"/>
</dbReference>
<dbReference type="Gene3D" id="2.40.50.140">
    <property type="entry name" value="Nucleic acid-binding proteins"/>
    <property type="match status" value="1"/>
</dbReference>
<dbReference type="HAMAP" id="MF_00075">
    <property type="entry name" value="IF_1"/>
    <property type="match status" value="1"/>
</dbReference>
<dbReference type="InterPro" id="IPR012340">
    <property type="entry name" value="NA-bd_OB-fold"/>
</dbReference>
<dbReference type="InterPro" id="IPR006196">
    <property type="entry name" value="RNA-binding_domain_S1_IF1"/>
</dbReference>
<dbReference type="InterPro" id="IPR003029">
    <property type="entry name" value="S1_domain"/>
</dbReference>
<dbReference type="InterPro" id="IPR004368">
    <property type="entry name" value="TIF_IF1"/>
</dbReference>
<dbReference type="NCBIfam" id="TIGR00008">
    <property type="entry name" value="infA"/>
    <property type="match status" value="1"/>
</dbReference>
<dbReference type="PANTHER" id="PTHR33370">
    <property type="entry name" value="TRANSLATION INITIATION FACTOR IF-1, CHLOROPLASTIC"/>
    <property type="match status" value="1"/>
</dbReference>
<dbReference type="PANTHER" id="PTHR33370:SF1">
    <property type="entry name" value="TRANSLATION INITIATION FACTOR IF-1, CHLOROPLASTIC"/>
    <property type="match status" value="1"/>
</dbReference>
<dbReference type="Pfam" id="PF01176">
    <property type="entry name" value="eIF-1a"/>
    <property type="match status" value="1"/>
</dbReference>
<dbReference type="SMART" id="SM00316">
    <property type="entry name" value="S1"/>
    <property type="match status" value="1"/>
</dbReference>
<dbReference type="SUPFAM" id="SSF50249">
    <property type="entry name" value="Nucleic acid-binding proteins"/>
    <property type="match status" value="1"/>
</dbReference>
<dbReference type="PROSITE" id="PS50832">
    <property type="entry name" value="S1_IF1_TYPE"/>
    <property type="match status" value="1"/>
</dbReference>
<name>IF1_DEHM1</name>